<accession>Q8CNQ3</accession>
<keyword id="KW-1003">Cell membrane</keyword>
<keyword id="KW-0133">Cell shape</keyword>
<keyword id="KW-0961">Cell wall biogenesis/degradation</keyword>
<keyword id="KW-0328">Glycosyltransferase</keyword>
<keyword id="KW-0472">Membrane</keyword>
<keyword id="KW-0573">Peptidoglycan synthesis</keyword>
<keyword id="KW-0808">Transferase</keyword>
<keyword id="KW-0812">Transmembrane</keyword>
<keyword id="KW-1133">Transmembrane helix</keyword>
<dbReference type="EC" id="2.4.99.28" evidence="1"/>
<dbReference type="EMBL" id="AE015929">
    <property type="protein sequence ID" value="AAO05158.1"/>
    <property type="molecule type" value="Genomic_DNA"/>
</dbReference>
<dbReference type="RefSeq" id="NP_765114.1">
    <property type="nucleotide sequence ID" value="NC_004461.1"/>
</dbReference>
<dbReference type="SMR" id="Q8CNQ3"/>
<dbReference type="CAZy" id="GT51">
    <property type="family name" value="Glycosyltransferase Family 51"/>
</dbReference>
<dbReference type="KEGG" id="sep:SE_1559"/>
<dbReference type="PATRIC" id="fig|176280.10.peg.1523"/>
<dbReference type="eggNOG" id="COG0744">
    <property type="taxonomic scope" value="Bacteria"/>
</dbReference>
<dbReference type="HOGENOM" id="CLU_006354_1_2_9"/>
<dbReference type="OrthoDB" id="9766909at2"/>
<dbReference type="UniPathway" id="UPA00219"/>
<dbReference type="Proteomes" id="UP000001411">
    <property type="component" value="Chromosome"/>
</dbReference>
<dbReference type="GO" id="GO:0030288">
    <property type="term" value="C:outer membrane-bounded periplasmic space"/>
    <property type="evidence" value="ECO:0007669"/>
    <property type="project" value="TreeGrafter"/>
</dbReference>
<dbReference type="GO" id="GO:0005886">
    <property type="term" value="C:plasma membrane"/>
    <property type="evidence" value="ECO:0007669"/>
    <property type="project" value="UniProtKB-SubCell"/>
</dbReference>
<dbReference type="GO" id="GO:0008955">
    <property type="term" value="F:peptidoglycan glycosyltransferase activity"/>
    <property type="evidence" value="ECO:0007669"/>
    <property type="project" value="UniProtKB-UniRule"/>
</dbReference>
<dbReference type="GO" id="GO:0071555">
    <property type="term" value="P:cell wall organization"/>
    <property type="evidence" value="ECO:0007669"/>
    <property type="project" value="UniProtKB-KW"/>
</dbReference>
<dbReference type="GO" id="GO:0009252">
    <property type="term" value="P:peptidoglycan biosynthetic process"/>
    <property type="evidence" value="ECO:0007669"/>
    <property type="project" value="UniProtKB-UniRule"/>
</dbReference>
<dbReference type="GO" id="GO:0008360">
    <property type="term" value="P:regulation of cell shape"/>
    <property type="evidence" value="ECO:0007669"/>
    <property type="project" value="UniProtKB-KW"/>
</dbReference>
<dbReference type="Gene3D" id="1.10.3810.10">
    <property type="entry name" value="Biosynthetic peptidoglycan transglycosylase-like"/>
    <property type="match status" value="1"/>
</dbReference>
<dbReference type="HAMAP" id="MF_01434">
    <property type="entry name" value="MGT"/>
    <property type="match status" value="1"/>
</dbReference>
<dbReference type="InterPro" id="IPR001264">
    <property type="entry name" value="Glyco_trans_51"/>
</dbReference>
<dbReference type="InterPro" id="IPR050396">
    <property type="entry name" value="Glycosyltr_51/Transpeptidase"/>
</dbReference>
<dbReference type="InterPro" id="IPR023346">
    <property type="entry name" value="Lysozyme-like_dom_sf"/>
</dbReference>
<dbReference type="InterPro" id="IPR022978">
    <property type="entry name" value="Monofunct_glyco_trans"/>
</dbReference>
<dbReference type="InterPro" id="IPR036950">
    <property type="entry name" value="PBP_transglycosylase"/>
</dbReference>
<dbReference type="NCBIfam" id="NF010008">
    <property type="entry name" value="PRK13481.1"/>
    <property type="match status" value="1"/>
</dbReference>
<dbReference type="PANTHER" id="PTHR32282">
    <property type="entry name" value="BINDING PROTEIN TRANSPEPTIDASE, PUTATIVE-RELATED"/>
    <property type="match status" value="1"/>
</dbReference>
<dbReference type="PANTHER" id="PTHR32282:SF32">
    <property type="entry name" value="PENICILLIN-BINDING PROTEIN 2A"/>
    <property type="match status" value="1"/>
</dbReference>
<dbReference type="Pfam" id="PF00912">
    <property type="entry name" value="Transgly"/>
    <property type="match status" value="1"/>
</dbReference>
<dbReference type="SUPFAM" id="SSF53955">
    <property type="entry name" value="Lysozyme-like"/>
    <property type="match status" value="1"/>
</dbReference>
<proteinExistence type="inferred from homology"/>
<evidence type="ECO:0000255" key="1">
    <source>
        <dbReference type="HAMAP-Rule" id="MF_01434"/>
    </source>
</evidence>
<comment type="function">
    <text evidence="1">Peptidoglycan polymerase that catalyzes glycan chain elongation using lipid-linked disaccharide-pentapeptide as the substrate.</text>
</comment>
<comment type="catalytic activity">
    <reaction evidence="1">
        <text>[GlcNAc-(1-&gt;4)-Mur2Ac(oyl-L-Ala-gamma-D-Glu-L-Lys-D-Ala-D-Ala)](n)-di-trans,octa-cis-undecaprenyl diphosphate + beta-D-GlcNAc-(1-&gt;4)-Mur2Ac(oyl-L-Ala-gamma-D-Glu-L-Lys-D-Ala-D-Ala)-di-trans,octa-cis-undecaprenyl diphosphate = [GlcNAc-(1-&gt;4)-Mur2Ac(oyl-L-Ala-gamma-D-Glu-L-Lys-D-Ala-D-Ala)](n+1)-di-trans,octa-cis-undecaprenyl diphosphate + di-trans,octa-cis-undecaprenyl diphosphate + H(+)</text>
        <dbReference type="Rhea" id="RHEA:23708"/>
        <dbReference type="Rhea" id="RHEA-COMP:9602"/>
        <dbReference type="Rhea" id="RHEA-COMP:9603"/>
        <dbReference type="ChEBI" id="CHEBI:15378"/>
        <dbReference type="ChEBI" id="CHEBI:58405"/>
        <dbReference type="ChEBI" id="CHEBI:60033"/>
        <dbReference type="ChEBI" id="CHEBI:78435"/>
        <dbReference type="EC" id="2.4.99.28"/>
    </reaction>
</comment>
<comment type="pathway">
    <text evidence="1">Cell wall biogenesis; peptidoglycan biosynthesis.</text>
</comment>
<comment type="subcellular location">
    <subcellularLocation>
        <location evidence="1">Cell membrane</location>
        <topology evidence="1">Single-pass membrane protein</topology>
    </subcellularLocation>
</comment>
<comment type="similarity">
    <text evidence="1">Belongs to the glycosyltransferase 51 family.</text>
</comment>
<protein>
    <recommendedName>
        <fullName evidence="1">Monofunctional glycosyltransferase</fullName>
        <shortName evidence="1">MGT</shortName>
        <ecNumber evidence="1">2.4.99.28</ecNumber>
    </recommendedName>
    <alternativeName>
        <fullName evidence="1">Peptidoglycan TGase</fullName>
    </alternativeName>
</protein>
<sequence>MKRSDKYTDDYIEQRYESQRPHYNTYYQPIGKPPKKKKSKRIFLKAIITILILLIIFFGVMYFISSRANVDDLKSIENKSDFVATENMPNYVKGAFISMEDERFYKHHGFDIKGTTRALFSTISDRDVQGGSTITQQVVKNYYYDNERSFTRKIKELFVARKVEKQYSKNQILSFYMNNIYYGDNQYTVEGAANHYFGVTVDKNNSNMSQISVLQSAILASKVNAPSVYDVNDMSNNYINRVKTNLEKMKQQNFISESQYQEAMSQLGN</sequence>
<organism>
    <name type="scientific">Staphylococcus epidermidis (strain ATCC 12228 / FDA PCI 1200)</name>
    <dbReference type="NCBI Taxonomy" id="176280"/>
    <lineage>
        <taxon>Bacteria</taxon>
        <taxon>Bacillati</taxon>
        <taxon>Bacillota</taxon>
        <taxon>Bacilli</taxon>
        <taxon>Bacillales</taxon>
        <taxon>Staphylococcaceae</taxon>
        <taxon>Staphylococcus</taxon>
    </lineage>
</organism>
<reference key="1">
    <citation type="journal article" date="2003" name="Mol. Microbiol.">
        <title>Genome-based analysis of virulence genes in a non-biofilm-forming Staphylococcus epidermidis strain (ATCC 12228).</title>
        <authorList>
            <person name="Zhang Y.-Q."/>
            <person name="Ren S.-X."/>
            <person name="Li H.-L."/>
            <person name="Wang Y.-X."/>
            <person name="Fu G."/>
            <person name="Yang J."/>
            <person name="Qin Z.-Q."/>
            <person name="Miao Y.-G."/>
            <person name="Wang W.-Y."/>
            <person name="Chen R.-S."/>
            <person name="Shen Y."/>
            <person name="Chen Z."/>
            <person name="Yuan Z.-H."/>
            <person name="Zhao G.-P."/>
            <person name="Qu D."/>
            <person name="Danchin A."/>
            <person name="Wen Y.-M."/>
        </authorList>
    </citation>
    <scope>NUCLEOTIDE SEQUENCE [LARGE SCALE GENOMIC DNA]</scope>
    <source>
        <strain>ATCC 12228 / FDA PCI 1200</strain>
    </source>
</reference>
<feature type="chain" id="PRO_0000083160" description="Monofunctional glycosyltransferase">
    <location>
        <begin position="1"/>
        <end position="269"/>
    </location>
</feature>
<feature type="transmembrane region" description="Helical" evidence="1">
    <location>
        <begin position="46"/>
        <end position="66"/>
    </location>
</feature>
<gene>
    <name evidence="1" type="primary">mgt</name>
    <name type="ordered locus">SE_1559</name>
</gene>
<name>MGT_STAES</name>